<evidence type="ECO:0000255" key="1">
    <source>
        <dbReference type="HAMAP-Rule" id="MF_00061"/>
    </source>
</evidence>
<name>ISPE_VIBC1</name>
<comment type="function">
    <text evidence="1">Catalyzes the phosphorylation of the position 2 hydroxy group of 4-diphosphocytidyl-2C-methyl-D-erythritol.</text>
</comment>
<comment type="catalytic activity">
    <reaction evidence="1">
        <text>4-CDP-2-C-methyl-D-erythritol + ATP = 4-CDP-2-C-methyl-D-erythritol 2-phosphate + ADP + H(+)</text>
        <dbReference type="Rhea" id="RHEA:18437"/>
        <dbReference type="ChEBI" id="CHEBI:15378"/>
        <dbReference type="ChEBI" id="CHEBI:30616"/>
        <dbReference type="ChEBI" id="CHEBI:57823"/>
        <dbReference type="ChEBI" id="CHEBI:57919"/>
        <dbReference type="ChEBI" id="CHEBI:456216"/>
        <dbReference type="EC" id="2.7.1.148"/>
    </reaction>
</comment>
<comment type="pathway">
    <text evidence="1">Isoprenoid biosynthesis; isopentenyl diphosphate biosynthesis via DXP pathway; isopentenyl diphosphate from 1-deoxy-D-xylulose 5-phosphate: step 3/6.</text>
</comment>
<comment type="similarity">
    <text evidence="1">Belongs to the GHMP kinase family. IspE subfamily.</text>
</comment>
<accession>A7MY79</accession>
<keyword id="KW-0067">ATP-binding</keyword>
<keyword id="KW-0414">Isoprene biosynthesis</keyword>
<keyword id="KW-0418">Kinase</keyword>
<keyword id="KW-0547">Nucleotide-binding</keyword>
<keyword id="KW-0808">Transferase</keyword>
<gene>
    <name evidence="1" type="primary">ispE</name>
    <name type="ordered locus">VIBHAR_01247</name>
</gene>
<protein>
    <recommendedName>
        <fullName evidence="1">4-diphosphocytidyl-2-C-methyl-D-erythritol kinase</fullName>
        <shortName evidence="1">CMK</shortName>
        <ecNumber evidence="1">2.7.1.148</ecNumber>
    </recommendedName>
    <alternativeName>
        <fullName evidence="1">4-(cytidine-5'-diphospho)-2-C-methyl-D-erythritol kinase</fullName>
    </alternativeName>
</protein>
<feature type="chain" id="PRO_1000007902" description="4-diphosphocytidyl-2-C-methyl-D-erythritol kinase">
    <location>
        <begin position="1"/>
        <end position="290"/>
    </location>
</feature>
<feature type="active site" evidence="1">
    <location>
        <position position="13"/>
    </location>
</feature>
<feature type="active site" evidence="1">
    <location>
        <position position="138"/>
    </location>
</feature>
<feature type="binding site" evidence="1">
    <location>
        <begin position="96"/>
        <end position="106"/>
    </location>
    <ligand>
        <name>ATP</name>
        <dbReference type="ChEBI" id="CHEBI:30616"/>
    </ligand>
</feature>
<reference key="1">
    <citation type="submission" date="2007-08" db="EMBL/GenBank/DDBJ databases">
        <authorList>
            <consortium name="The Vibrio harveyi Genome Sequencing Project"/>
            <person name="Bassler B."/>
            <person name="Clifton S.W."/>
            <person name="Fulton L."/>
            <person name="Delehaunty K."/>
            <person name="Fronick C."/>
            <person name="Harrison M."/>
            <person name="Markivic C."/>
            <person name="Fulton R."/>
            <person name="Tin-Wollam A.-M."/>
            <person name="Shah N."/>
            <person name="Pepin K."/>
            <person name="Nash W."/>
            <person name="Thiruvilangam P."/>
            <person name="Bhonagiri V."/>
            <person name="Waters C."/>
            <person name="Tu K.C."/>
            <person name="Irgon J."/>
            <person name="Wilson R.K."/>
        </authorList>
    </citation>
    <scope>NUCLEOTIDE SEQUENCE [LARGE SCALE GENOMIC DNA]</scope>
    <source>
        <strain>ATCC BAA-1116 / BB120</strain>
    </source>
</reference>
<sequence length="290" mass="31716">MIDLSTRWPSPAKLNLFLYINGRTENGYHELQTLFQFVDHGDELTIQANDSGEITISPEIEGVPLKDNLIWKAATALQRFANCSYGAHIDLHKILPMGGGIGGGSSNAATALVALNYLWQTNLSDDELAEIGLALGADVPVFVRGFSAFAEGVGEKLSPAHPDEKWYLVVRPNVSIATADIFGHPDLTRNTPKRDLETLLNTPSVNDCEKIVRMLYPEVDKQLSWLLQYAPSRLTGTGSCVFAEFSSKSEAETILAQLSDKVSAFVAQGRNISPLKETLAEYQSASHRPI</sequence>
<proteinExistence type="inferred from homology"/>
<organism>
    <name type="scientific">Vibrio campbellii (strain ATCC BAA-1116)</name>
    <dbReference type="NCBI Taxonomy" id="2902295"/>
    <lineage>
        <taxon>Bacteria</taxon>
        <taxon>Pseudomonadati</taxon>
        <taxon>Pseudomonadota</taxon>
        <taxon>Gammaproteobacteria</taxon>
        <taxon>Vibrionales</taxon>
        <taxon>Vibrionaceae</taxon>
        <taxon>Vibrio</taxon>
    </lineage>
</organism>
<dbReference type="EC" id="2.7.1.148" evidence="1"/>
<dbReference type="EMBL" id="CP000789">
    <property type="protein sequence ID" value="ABU70226.1"/>
    <property type="molecule type" value="Genomic_DNA"/>
</dbReference>
<dbReference type="SMR" id="A7MY79"/>
<dbReference type="KEGG" id="vha:VIBHAR_01247"/>
<dbReference type="PATRIC" id="fig|338187.25.peg.1395"/>
<dbReference type="UniPathway" id="UPA00056">
    <property type="reaction ID" value="UER00094"/>
</dbReference>
<dbReference type="Proteomes" id="UP000008152">
    <property type="component" value="Chromosome I"/>
</dbReference>
<dbReference type="GO" id="GO:0050515">
    <property type="term" value="F:4-(cytidine 5'-diphospho)-2-C-methyl-D-erythritol kinase activity"/>
    <property type="evidence" value="ECO:0007669"/>
    <property type="project" value="UniProtKB-UniRule"/>
</dbReference>
<dbReference type="GO" id="GO:0005524">
    <property type="term" value="F:ATP binding"/>
    <property type="evidence" value="ECO:0007669"/>
    <property type="project" value="UniProtKB-UniRule"/>
</dbReference>
<dbReference type="GO" id="GO:0019288">
    <property type="term" value="P:isopentenyl diphosphate biosynthetic process, methylerythritol 4-phosphate pathway"/>
    <property type="evidence" value="ECO:0007669"/>
    <property type="project" value="UniProtKB-UniRule"/>
</dbReference>
<dbReference type="GO" id="GO:0016114">
    <property type="term" value="P:terpenoid biosynthetic process"/>
    <property type="evidence" value="ECO:0007669"/>
    <property type="project" value="InterPro"/>
</dbReference>
<dbReference type="FunFam" id="3.30.230.10:FF:000022">
    <property type="entry name" value="4-diphosphocytidyl-2-C-methyl-D-erythritol kinase"/>
    <property type="match status" value="1"/>
</dbReference>
<dbReference type="Gene3D" id="3.30.230.10">
    <property type="match status" value="1"/>
</dbReference>
<dbReference type="Gene3D" id="3.30.70.890">
    <property type="entry name" value="GHMP kinase, C-terminal domain"/>
    <property type="match status" value="1"/>
</dbReference>
<dbReference type="HAMAP" id="MF_00061">
    <property type="entry name" value="IspE"/>
    <property type="match status" value="1"/>
</dbReference>
<dbReference type="InterPro" id="IPR013750">
    <property type="entry name" value="GHMP_kinase_C_dom"/>
</dbReference>
<dbReference type="InterPro" id="IPR036554">
    <property type="entry name" value="GHMP_kinase_C_sf"/>
</dbReference>
<dbReference type="InterPro" id="IPR006204">
    <property type="entry name" value="GHMP_kinase_N_dom"/>
</dbReference>
<dbReference type="InterPro" id="IPR004424">
    <property type="entry name" value="IspE"/>
</dbReference>
<dbReference type="InterPro" id="IPR020568">
    <property type="entry name" value="Ribosomal_Su5_D2-typ_SF"/>
</dbReference>
<dbReference type="InterPro" id="IPR014721">
    <property type="entry name" value="Ribsml_uS5_D2-typ_fold_subgr"/>
</dbReference>
<dbReference type="NCBIfam" id="TIGR00154">
    <property type="entry name" value="ispE"/>
    <property type="match status" value="1"/>
</dbReference>
<dbReference type="PANTHER" id="PTHR43527">
    <property type="entry name" value="4-DIPHOSPHOCYTIDYL-2-C-METHYL-D-ERYTHRITOL KINASE, CHLOROPLASTIC"/>
    <property type="match status" value="1"/>
</dbReference>
<dbReference type="PANTHER" id="PTHR43527:SF2">
    <property type="entry name" value="4-DIPHOSPHOCYTIDYL-2-C-METHYL-D-ERYTHRITOL KINASE, CHLOROPLASTIC"/>
    <property type="match status" value="1"/>
</dbReference>
<dbReference type="Pfam" id="PF08544">
    <property type="entry name" value="GHMP_kinases_C"/>
    <property type="match status" value="1"/>
</dbReference>
<dbReference type="Pfam" id="PF00288">
    <property type="entry name" value="GHMP_kinases_N"/>
    <property type="match status" value="1"/>
</dbReference>
<dbReference type="PIRSF" id="PIRSF010376">
    <property type="entry name" value="IspE"/>
    <property type="match status" value="1"/>
</dbReference>
<dbReference type="SUPFAM" id="SSF55060">
    <property type="entry name" value="GHMP Kinase, C-terminal domain"/>
    <property type="match status" value="1"/>
</dbReference>
<dbReference type="SUPFAM" id="SSF54211">
    <property type="entry name" value="Ribosomal protein S5 domain 2-like"/>
    <property type="match status" value="1"/>
</dbReference>